<feature type="chain" id="PRO_1000141042" description="Small ribosomal subunit protein uS11">
    <location>
        <begin position="1"/>
        <end position="128"/>
    </location>
</feature>
<proteinExistence type="inferred from homology"/>
<evidence type="ECO:0000255" key="1">
    <source>
        <dbReference type="HAMAP-Rule" id="MF_01310"/>
    </source>
</evidence>
<evidence type="ECO:0000305" key="2"/>
<protein>
    <recommendedName>
        <fullName evidence="1">Small ribosomal subunit protein uS11</fullName>
    </recommendedName>
    <alternativeName>
        <fullName evidence="2">30S ribosomal protein S11</fullName>
    </alternativeName>
</protein>
<accession>B2HZ85</accession>
<keyword id="KW-0687">Ribonucleoprotein</keyword>
<keyword id="KW-0689">Ribosomal protein</keyword>
<keyword id="KW-0694">RNA-binding</keyword>
<keyword id="KW-0699">rRNA-binding</keyword>
<sequence>MAKDTRTRKKVTRTVSEGVAHIHASFNNTIVTITDRQGNALAWATSGGQGFRGSRKSTPFAAQVAAEVAGKAALDYGLKNLDVLVKGPGPGRESAVRALGAVGYKINSITDVTPIPHNGCRPPKKRRV</sequence>
<gene>
    <name evidence="1" type="primary">rpsK</name>
    <name type="ordered locus">ACICU_03255</name>
</gene>
<organism>
    <name type="scientific">Acinetobacter baumannii (strain ACICU)</name>
    <dbReference type="NCBI Taxonomy" id="405416"/>
    <lineage>
        <taxon>Bacteria</taxon>
        <taxon>Pseudomonadati</taxon>
        <taxon>Pseudomonadota</taxon>
        <taxon>Gammaproteobacteria</taxon>
        <taxon>Moraxellales</taxon>
        <taxon>Moraxellaceae</taxon>
        <taxon>Acinetobacter</taxon>
        <taxon>Acinetobacter calcoaceticus/baumannii complex</taxon>
    </lineage>
</organism>
<dbReference type="EMBL" id="CP000863">
    <property type="protein sequence ID" value="ACC58567.1"/>
    <property type="molecule type" value="Genomic_DNA"/>
</dbReference>
<dbReference type="RefSeq" id="WP_001040166.1">
    <property type="nucleotide sequence ID" value="NZ_CP031380.1"/>
</dbReference>
<dbReference type="SMR" id="B2HZ85"/>
<dbReference type="GeneID" id="97425222"/>
<dbReference type="KEGG" id="abc:ACICU_03255"/>
<dbReference type="HOGENOM" id="CLU_072439_5_0_6"/>
<dbReference type="Proteomes" id="UP000008839">
    <property type="component" value="Chromosome"/>
</dbReference>
<dbReference type="GO" id="GO:1990904">
    <property type="term" value="C:ribonucleoprotein complex"/>
    <property type="evidence" value="ECO:0007669"/>
    <property type="project" value="UniProtKB-KW"/>
</dbReference>
<dbReference type="GO" id="GO:0005840">
    <property type="term" value="C:ribosome"/>
    <property type="evidence" value="ECO:0007669"/>
    <property type="project" value="UniProtKB-KW"/>
</dbReference>
<dbReference type="GO" id="GO:0019843">
    <property type="term" value="F:rRNA binding"/>
    <property type="evidence" value="ECO:0007669"/>
    <property type="project" value="UniProtKB-UniRule"/>
</dbReference>
<dbReference type="GO" id="GO:0003735">
    <property type="term" value="F:structural constituent of ribosome"/>
    <property type="evidence" value="ECO:0007669"/>
    <property type="project" value="InterPro"/>
</dbReference>
<dbReference type="GO" id="GO:0006412">
    <property type="term" value="P:translation"/>
    <property type="evidence" value="ECO:0007669"/>
    <property type="project" value="UniProtKB-UniRule"/>
</dbReference>
<dbReference type="FunFam" id="3.30.420.80:FF:000001">
    <property type="entry name" value="30S ribosomal protein S11"/>
    <property type="match status" value="1"/>
</dbReference>
<dbReference type="Gene3D" id="3.30.420.80">
    <property type="entry name" value="Ribosomal protein S11"/>
    <property type="match status" value="1"/>
</dbReference>
<dbReference type="HAMAP" id="MF_01310">
    <property type="entry name" value="Ribosomal_uS11"/>
    <property type="match status" value="1"/>
</dbReference>
<dbReference type="InterPro" id="IPR001971">
    <property type="entry name" value="Ribosomal_uS11"/>
</dbReference>
<dbReference type="InterPro" id="IPR019981">
    <property type="entry name" value="Ribosomal_uS11_bac-type"/>
</dbReference>
<dbReference type="InterPro" id="IPR018102">
    <property type="entry name" value="Ribosomal_uS11_CS"/>
</dbReference>
<dbReference type="InterPro" id="IPR036967">
    <property type="entry name" value="Ribosomal_uS11_sf"/>
</dbReference>
<dbReference type="NCBIfam" id="NF003698">
    <property type="entry name" value="PRK05309.1"/>
    <property type="match status" value="1"/>
</dbReference>
<dbReference type="NCBIfam" id="TIGR03632">
    <property type="entry name" value="uS11_bact"/>
    <property type="match status" value="1"/>
</dbReference>
<dbReference type="PANTHER" id="PTHR11759">
    <property type="entry name" value="40S RIBOSOMAL PROTEIN S14/30S RIBOSOMAL PROTEIN S11"/>
    <property type="match status" value="1"/>
</dbReference>
<dbReference type="Pfam" id="PF00411">
    <property type="entry name" value="Ribosomal_S11"/>
    <property type="match status" value="1"/>
</dbReference>
<dbReference type="PIRSF" id="PIRSF002131">
    <property type="entry name" value="Ribosomal_S11"/>
    <property type="match status" value="1"/>
</dbReference>
<dbReference type="SUPFAM" id="SSF53137">
    <property type="entry name" value="Translational machinery components"/>
    <property type="match status" value="1"/>
</dbReference>
<dbReference type="PROSITE" id="PS00054">
    <property type="entry name" value="RIBOSOMAL_S11"/>
    <property type="match status" value="1"/>
</dbReference>
<reference key="1">
    <citation type="journal article" date="2008" name="Antimicrob. Agents Chemother.">
        <title>Whole-genome pyrosequencing of an epidemic multidrug-resistant Acinetobacter baumannii strain belonging to the European clone II group.</title>
        <authorList>
            <person name="Iacono M."/>
            <person name="Villa L."/>
            <person name="Fortini D."/>
            <person name="Bordoni R."/>
            <person name="Imperi F."/>
            <person name="Bonnal R.J."/>
            <person name="Sicheritz-Ponten T."/>
            <person name="De Bellis G."/>
            <person name="Visca P."/>
            <person name="Cassone A."/>
            <person name="Carattoli A."/>
        </authorList>
    </citation>
    <scope>NUCLEOTIDE SEQUENCE [LARGE SCALE GENOMIC DNA]</scope>
    <source>
        <strain>ACICU</strain>
    </source>
</reference>
<name>RS11_ACIBC</name>
<comment type="function">
    <text evidence="1">Located on the platform of the 30S subunit, it bridges several disparate RNA helices of the 16S rRNA. Forms part of the Shine-Dalgarno cleft in the 70S ribosome.</text>
</comment>
<comment type="subunit">
    <text evidence="1">Part of the 30S ribosomal subunit. Interacts with proteins S7 and S18. Binds to IF-3.</text>
</comment>
<comment type="similarity">
    <text evidence="1">Belongs to the universal ribosomal protein uS11 family.</text>
</comment>